<protein>
    <recommendedName>
        <fullName evidence="1">Large ribosomal subunit protein uL10</fullName>
    </recommendedName>
    <alternativeName>
        <fullName evidence="2">50S ribosomal protein L10</fullName>
    </alternativeName>
</protein>
<keyword id="KW-0687">Ribonucleoprotein</keyword>
<keyword id="KW-0689">Ribosomal protein</keyword>
<keyword id="KW-0694">RNA-binding</keyword>
<keyword id="KW-0699">rRNA-binding</keyword>
<sequence length="172" mass="18155">MNRAEKREFVTWLNEAFRKSGSVIVAHYSGLTVSQMNDLRSKMSEAGGAIKVAKNRLAKIALQGTESESIVDLFSGQTLIAYSEDPITAPKVAVDFAKTNDKFVILGGSMGATSLSVDAVKSLASLPSLNELRAKLVGMISTPATRIAQVVNAPAGQVVRVIGAYAQEGKAA</sequence>
<comment type="function">
    <text evidence="1">Forms part of the ribosomal stalk, playing a central role in the interaction of the ribosome with GTP-bound translation factors.</text>
</comment>
<comment type="subunit">
    <text evidence="1">Part of the ribosomal stalk of the 50S ribosomal subunit. The N-terminus interacts with L11 and the large rRNA to form the base of the stalk. The C-terminus forms an elongated spine to which L12 dimers bind in a sequential fashion forming a multimeric L10(L12)X complex.</text>
</comment>
<comment type="similarity">
    <text evidence="1">Belongs to the universal ribosomal protein uL10 family.</text>
</comment>
<gene>
    <name evidence="1" type="primary">rplJ</name>
    <name type="ordered locus">BH06080</name>
</gene>
<name>RL10_BARHE</name>
<organism>
    <name type="scientific">Bartonella henselae (strain ATCC 49882 / DSM 28221 / CCUG 30454 / Houston 1)</name>
    <name type="common">Rochalimaea henselae</name>
    <dbReference type="NCBI Taxonomy" id="283166"/>
    <lineage>
        <taxon>Bacteria</taxon>
        <taxon>Pseudomonadati</taxon>
        <taxon>Pseudomonadota</taxon>
        <taxon>Alphaproteobacteria</taxon>
        <taxon>Hyphomicrobiales</taxon>
        <taxon>Bartonellaceae</taxon>
        <taxon>Bartonella</taxon>
    </lineage>
</organism>
<evidence type="ECO:0000255" key="1">
    <source>
        <dbReference type="HAMAP-Rule" id="MF_00362"/>
    </source>
</evidence>
<evidence type="ECO:0000305" key="2"/>
<reference key="1">
    <citation type="journal article" date="2004" name="Proc. Natl. Acad. Sci. U.S.A.">
        <title>The louse-borne human pathogen Bartonella quintana is a genomic derivative of the zoonotic agent Bartonella henselae.</title>
        <authorList>
            <person name="Alsmark U.C.M."/>
            <person name="Frank A.C."/>
            <person name="Karlberg E.O."/>
            <person name="Legault B.-A."/>
            <person name="Ardell D.H."/>
            <person name="Canbaeck B."/>
            <person name="Eriksson A.-S."/>
            <person name="Naeslund A.K."/>
            <person name="Handley S.A."/>
            <person name="Huvet M."/>
            <person name="La Scola B."/>
            <person name="Holmberg M."/>
            <person name="Andersson S.G.E."/>
        </authorList>
    </citation>
    <scope>NUCLEOTIDE SEQUENCE [LARGE SCALE GENOMIC DNA]</scope>
    <source>
        <strain>ATCC 49882 / DSM 28221 / CCUG 30454 / Houston 1</strain>
    </source>
</reference>
<dbReference type="EMBL" id="BX897699">
    <property type="protein sequence ID" value="CAF27412.1"/>
    <property type="molecule type" value="Genomic_DNA"/>
</dbReference>
<dbReference type="RefSeq" id="WP_011180532.1">
    <property type="nucleotide sequence ID" value="NZ_LRIJ02000001.1"/>
</dbReference>
<dbReference type="SMR" id="Q6G3X7"/>
<dbReference type="PaxDb" id="283166-BH06080"/>
<dbReference type="EnsemblBacteria" id="CAF27412">
    <property type="protein sequence ID" value="CAF27412"/>
    <property type="gene ID" value="BH06080"/>
</dbReference>
<dbReference type="GeneID" id="92985666"/>
<dbReference type="KEGG" id="bhe:BH06080"/>
<dbReference type="eggNOG" id="COG0244">
    <property type="taxonomic scope" value="Bacteria"/>
</dbReference>
<dbReference type="OrthoDB" id="9791972at2"/>
<dbReference type="Proteomes" id="UP000000421">
    <property type="component" value="Chromosome"/>
</dbReference>
<dbReference type="GO" id="GO:0015934">
    <property type="term" value="C:large ribosomal subunit"/>
    <property type="evidence" value="ECO:0007669"/>
    <property type="project" value="InterPro"/>
</dbReference>
<dbReference type="GO" id="GO:0070180">
    <property type="term" value="F:large ribosomal subunit rRNA binding"/>
    <property type="evidence" value="ECO:0007669"/>
    <property type="project" value="UniProtKB-UniRule"/>
</dbReference>
<dbReference type="GO" id="GO:0003735">
    <property type="term" value="F:structural constituent of ribosome"/>
    <property type="evidence" value="ECO:0007669"/>
    <property type="project" value="InterPro"/>
</dbReference>
<dbReference type="GO" id="GO:0006412">
    <property type="term" value="P:translation"/>
    <property type="evidence" value="ECO:0007669"/>
    <property type="project" value="UniProtKB-UniRule"/>
</dbReference>
<dbReference type="CDD" id="cd05797">
    <property type="entry name" value="Ribosomal_L10"/>
    <property type="match status" value="1"/>
</dbReference>
<dbReference type="Gene3D" id="3.30.70.1730">
    <property type="match status" value="1"/>
</dbReference>
<dbReference type="Gene3D" id="6.10.250.290">
    <property type="match status" value="1"/>
</dbReference>
<dbReference type="HAMAP" id="MF_00362">
    <property type="entry name" value="Ribosomal_uL10"/>
    <property type="match status" value="1"/>
</dbReference>
<dbReference type="InterPro" id="IPR001790">
    <property type="entry name" value="Ribosomal_uL10"/>
</dbReference>
<dbReference type="InterPro" id="IPR043141">
    <property type="entry name" value="Ribosomal_uL10-like_sf"/>
</dbReference>
<dbReference type="InterPro" id="IPR022973">
    <property type="entry name" value="Ribosomal_uL10_bac"/>
</dbReference>
<dbReference type="InterPro" id="IPR047865">
    <property type="entry name" value="Ribosomal_uL10_bac_type"/>
</dbReference>
<dbReference type="InterPro" id="IPR002363">
    <property type="entry name" value="Ribosomal_uL10_CS_bac"/>
</dbReference>
<dbReference type="NCBIfam" id="NF000955">
    <property type="entry name" value="PRK00099.1-1"/>
    <property type="match status" value="1"/>
</dbReference>
<dbReference type="PANTHER" id="PTHR11560">
    <property type="entry name" value="39S RIBOSOMAL PROTEIN L10, MITOCHONDRIAL"/>
    <property type="match status" value="1"/>
</dbReference>
<dbReference type="Pfam" id="PF00466">
    <property type="entry name" value="Ribosomal_L10"/>
    <property type="match status" value="1"/>
</dbReference>
<dbReference type="SUPFAM" id="SSF160369">
    <property type="entry name" value="Ribosomal protein L10-like"/>
    <property type="match status" value="1"/>
</dbReference>
<dbReference type="PROSITE" id="PS01109">
    <property type="entry name" value="RIBOSOMAL_L10"/>
    <property type="match status" value="1"/>
</dbReference>
<proteinExistence type="inferred from homology"/>
<feature type="chain" id="PRO_0000154589" description="Large ribosomal subunit protein uL10">
    <location>
        <begin position="1"/>
        <end position="172"/>
    </location>
</feature>
<accession>Q6G3X7</accession>